<evidence type="ECO:0000255" key="1">
    <source>
        <dbReference type="HAMAP-Rule" id="MF_01547"/>
    </source>
</evidence>
<accession>A5WCU8</accession>
<name>RLME_PSYWF</name>
<comment type="function">
    <text evidence="1">Specifically methylates the uridine in position 2552 of 23S rRNA at the 2'-O position of the ribose in the fully assembled 50S ribosomal subunit.</text>
</comment>
<comment type="catalytic activity">
    <reaction evidence="1">
        <text>uridine(2552) in 23S rRNA + S-adenosyl-L-methionine = 2'-O-methyluridine(2552) in 23S rRNA + S-adenosyl-L-homocysteine + H(+)</text>
        <dbReference type="Rhea" id="RHEA:42720"/>
        <dbReference type="Rhea" id="RHEA-COMP:10202"/>
        <dbReference type="Rhea" id="RHEA-COMP:10203"/>
        <dbReference type="ChEBI" id="CHEBI:15378"/>
        <dbReference type="ChEBI" id="CHEBI:57856"/>
        <dbReference type="ChEBI" id="CHEBI:59789"/>
        <dbReference type="ChEBI" id="CHEBI:65315"/>
        <dbReference type="ChEBI" id="CHEBI:74478"/>
        <dbReference type="EC" id="2.1.1.166"/>
    </reaction>
</comment>
<comment type="subcellular location">
    <subcellularLocation>
        <location evidence="1">Cytoplasm</location>
    </subcellularLocation>
</comment>
<comment type="similarity">
    <text evidence="1">Belongs to the class I-like SAM-binding methyltransferase superfamily. RNA methyltransferase RlmE family.</text>
</comment>
<protein>
    <recommendedName>
        <fullName evidence="1">Ribosomal RNA large subunit methyltransferase E</fullName>
        <ecNumber evidence="1">2.1.1.166</ecNumber>
    </recommendedName>
    <alternativeName>
        <fullName evidence="1">23S rRNA Um2552 methyltransferase</fullName>
    </alternativeName>
    <alternativeName>
        <fullName evidence="1">rRNA (uridine-2'-O-)-methyltransferase</fullName>
    </alternativeName>
</protein>
<dbReference type="EC" id="2.1.1.166" evidence="1"/>
<dbReference type="EMBL" id="CP000713">
    <property type="protein sequence ID" value="ABQ93489.1"/>
    <property type="molecule type" value="Genomic_DNA"/>
</dbReference>
<dbReference type="SMR" id="A5WCU8"/>
<dbReference type="STRING" id="349106.PsycPRwf_0534"/>
<dbReference type="KEGG" id="prw:PsycPRwf_0534"/>
<dbReference type="eggNOG" id="COG0293">
    <property type="taxonomic scope" value="Bacteria"/>
</dbReference>
<dbReference type="HOGENOM" id="CLU_009422_4_0_6"/>
<dbReference type="GO" id="GO:0005737">
    <property type="term" value="C:cytoplasm"/>
    <property type="evidence" value="ECO:0007669"/>
    <property type="project" value="UniProtKB-SubCell"/>
</dbReference>
<dbReference type="GO" id="GO:0008650">
    <property type="term" value="F:rRNA (uridine-2'-O-)-methyltransferase activity"/>
    <property type="evidence" value="ECO:0007669"/>
    <property type="project" value="UniProtKB-UniRule"/>
</dbReference>
<dbReference type="FunFam" id="3.40.50.150:FF:000005">
    <property type="entry name" value="Ribosomal RNA large subunit methyltransferase E"/>
    <property type="match status" value="1"/>
</dbReference>
<dbReference type="Gene3D" id="3.40.50.150">
    <property type="entry name" value="Vaccinia Virus protein VP39"/>
    <property type="match status" value="1"/>
</dbReference>
<dbReference type="HAMAP" id="MF_01547">
    <property type="entry name" value="RNA_methyltr_E"/>
    <property type="match status" value="1"/>
</dbReference>
<dbReference type="InterPro" id="IPR050082">
    <property type="entry name" value="RNA_methyltr_RlmE"/>
</dbReference>
<dbReference type="InterPro" id="IPR002877">
    <property type="entry name" value="RNA_MeTrfase_FtsJ_dom"/>
</dbReference>
<dbReference type="InterPro" id="IPR015507">
    <property type="entry name" value="rRNA-MeTfrase_E"/>
</dbReference>
<dbReference type="InterPro" id="IPR029063">
    <property type="entry name" value="SAM-dependent_MTases_sf"/>
</dbReference>
<dbReference type="NCBIfam" id="NF008390">
    <property type="entry name" value="PRK11188.1"/>
    <property type="match status" value="1"/>
</dbReference>
<dbReference type="PANTHER" id="PTHR10920">
    <property type="entry name" value="RIBOSOMAL RNA METHYLTRANSFERASE"/>
    <property type="match status" value="1"/>
</dbReference>
<dbReference type="PANTHER" id="PTHR10920:SF18">
    <property type="entry name" value="RRNA METHYLTRANSFERASE 2, MITOCHONDRIAL"/>
    <property type="match status" value="1"/>
</dbReference>
<dbReference type="Pfam" id="PF01728">
    <property type="entry name" value="FtsJ"/>
    <property type="match status" value="1"/>
</dbReference>
<dbReference type="PIRSF" id="PIRSF005461">
    <property type="entry name" value="23S_rRNA_mtase"/>
    <property type="match status" value="1"/>
</dbReference>
<dbReference type="SUPFAM" id="SSF53335">
    <property type="entry name" value="S-adenosyl-L-methionine-dependent methyltransferases"/>
    <property type="match status" value="1"/>
</dbReference>
<sequence>MATRITNKGLSKSSKAWMKEHLDDHYVQLAQKEGYRARAAYKLLEINEKTNLIKKGMTVVDLGSAPGSWSQVAGRLVGDEGILIASDILPMDALENVTFIQGDFREEAVFDRLMSEVGDRQVDVVLSDMAPNTSGHTAVDQPRMIYLCELAVDFALRVLPKGGSLVMKVFQGEGEQQLRQQLQSQFSKVRTIKPAASRPRSKEVFWVATK</sequence>
<keyword id="KW-0963">Cytoplasm</keyword>
<keyword id="KW-0489">Methyltransferase</keyword>
<keyword id="KW-0698">rRNA processing</keyword>
<keyword id="KW-0949">S-adenosyl-L-methionine</keyword>
<keyword id="KW-0808">Transferase</keyword>
<reference key="1">
    <citation type="submission" date="2007-05" db="EMBL/GenBank/DDBJ databases">
        <title>Complete sequence of chromosome of Psychrobacter sp. PRwf-1.</title>
        <authorList>
            <consortium name="US DOE Joint Genome Institute"/>
            <person name="Copeland A."/>
            <person name="Lucas S."/>
            <person name="Lapidus A."/>
            <person name="Barry K."/>
            <person name="Detter J.C."/>
            <person name="Glavina del Rio T."/>
            <person name="Hammon N."/>
            <person name="Israni S."/>
            <person name="Dalin E."/>
            <person name="Tice H."/>
            <person name="Pitluck S."/>
            <person name="Chain P."/>
            <person name="Malfatti S."/>
            <person name="Shin M."/>
            <person name="Vergez L."/>
            <person name="Schmutz J."/>
            <person name="Larimer F."/>
            <person name="Land M."/>
            <person name="Hauser L."/>
            <person name="Kyrpides N."/>
            <person name="Kim E."/>
            <person name="Tiedje J."/>
            <person name="Richardson P."/>
        </authorList>
    </citation>
    <scope>NUCLEOTIDE SEQUENCE [LARGE SCALE GENOMIC DNA]</scope>
    <source>
        <strain>PRwf-1</strain>
    </source>
</reference>
<proteinExistence type="inferred from homology"/>
<gene>
    <name evidence="1" type="primary">rlmE</name>
    <name evidence="1" type="synonym">ftsJ</name>
    <name evidence="1" type="synonym">rrmJ</name>
    <name type="ordered locus">PsycPRwf_0534</name>
</gene>
<feature type="chain" id="PRO_1000087703" description="Ribosomal RNA large subunit methyltransferase E">
    <location>
        <begin position="1"/>
        <end position="210"/>
    </location>
</feature>
<feature type="active site" description="Proton acceptor" evidence="1">
    <location>
        <position position="168"/>
    </location>
</feature>
<feature type="binding site" evidence="1">
    <location>
        <position position="67"/>
    </location>
    <ligand>
        <name>S-adenosyl-L-methionine</name>
        <dbReference type="ChEBI" id="CHEBI:59789"/>
    </ligand>
</feature>
<feature type="binding site" evidence="1">
    <location>
        <position position="69"/>
    </location>
    <ligand>
        <name>S-adenosyl-L-methionine</name>
        <dbReference type="ChEBI" id="CHEBI:59789"/>
    </ligand>
</feature>
<feature type="binding site" evidence="1">
    <location>
        <position position="87"/>
    </location>
    <ligand>
        <name>S-adenosyl-L-methionine</name>
        <dbReference type="ChEBI" id="CHEBI:59789"/>
    </ligand>
</feature>
<feature type="binding site" evidence="1">
    <location>
        <position position="103"/>
    </location>
    <ligand>
        <name>S-adenosyl-L-methionine</name>
        <dbReference type="ChEBI" id="CHEBI:59789"/>
    </ligand>
</feature>
<feature type="binding site" evidence="1">
    <location>
        <position position="128"/>
    </location>
    <ligand>
        <name>S-adenosyl-L-methionine</name>
        <dbReference type="ChEBI" id="CHEBI:59789"/>
    </ligand>
</feature>
<organism>
    <name type="scientific">Psychrobacter sp. (strain PRwf-1)</name>
    <dbReference type="NCBI Taxonomy" id="349106"/>
    <lineage>
        <taxon>Bacteria</taxon>
        <taxon>Pseudomonadati</taxon>
        <taxon>Pseudomonadota</taxon>
        <taxon>Gammaproteobacteria</taxon>
        <taxon>Moraxellales</taxon>
        <taxon>Moraxellaceae</taxon>
        <taxon>Psychrobacter</taxon>
    </lineage>
</organism>